<dbReference type="EC" id="2.7.4.9" evidence="1"/>
<dbReference type="EMBL" id="CP000559">
    <property type="protein sequence ID" value="ABN07501.1"/>
    <property type="molecule type" value="Genomic_DNA"/>
</dbReference>
<dbReference type="RefSeq" id="WP_011833704.1">
    <property type="nucleotide sequence ID" value="NC_008942.1"/>
</dbReference>
<dbReference type="SMR" id="A2ST45"/>
<dbReference type="STRING" id="410358.Mlab_1334"/>
<dbReference type="GeneID" id="4795362"/>
<dbReference type="KEGG" id="mla:Mlab_1334"/>
<dbReference type="eggNOG" id="arCOG01891">
    <property type="taxonomic scope" value="Archaea"/>
</dbReference>
<dbReference type="HOGENOM" id="CLU_049131_0_2_2"/>
<dbReference type="OrthoDB" id="43083at2157"/>
<dbReference type="Proteomes" id="UP000000365">
    <property type="component" value="Chromosome"/>
</dbReference>
<dbReference type="GO" id="GO:0005737">
    <property type="term" value="C:cytoplasm"/>
    <property type="evidence" value="ECO:0007669"/>
    <property type="project" value="TreeGrafter"/>
</dbReference>
<dbReference type="GO" id="GO:0005524">
    <property type="term" value="F:ATP binding"/>
    <property type="evidence" value="ECO:0007669"/>
    <property type="project" value="UniProtKB-UniRule"/>
</dbReference>
<dbReference type="GO" id="GO:0004798">
    <property type="term" value="F:dTMP kinase activity"/>
    <property type="evidence" value="ECO:0007669"/>
    <property type="project" value="UniProtKB-UniRule"/>
</dbReference>
<dbReference type="GO" id="GO:0006233">
    <property type="term" value="P:dTDP biosynthetic process"/>
    <property type="evidence" value="ECO:0007669"/>
    <property type="project" value="InterPro"/>
</dbReference>
<dbReference type="GO" id="GO:0006235">
    <property type="term" value="P:dTTP biosynthetic process"/>
    <property type="evidence" value="ECO:0007669"/>
    <property type="project" value="UniProtKB-UniRule"/>
</dbReference>
<dbReference type="GO" id="GO:0006227">
    <property type="term" value="P:dUDP biosynthetic process"/>
    <property type="evidence" value="ECO:0007669"/>
    <property type="project" value="TreeGrafter"/>
</dbReference>
<dbReference type="CDD" id="cd01672">
    <property type="entry name" value="TMPK"/>
    <property type="match status" value="1"/>
</dbReference>
<dbReference type="Gene3D" id="3.40.50.300">
    <property type="entry name" value="P-loop containing nucleotide triphosphate hydrolases"/>
    <property type="match status" value="1"/>
</dbReference>
<dbReference type="HAMAP" id="MF_00165">
    <property type="entry name" value="Thymidylate_kinase"/>
    <property type="match status" value="1"/>
</dbReference>
<dbReference type="InterPro" id="IPR027417">
    <property type="entry name" value="P-loop_NTPase"/>
</dbReference>
<dbReference type="InterPro" id="IPR039430">
    <property type="entry name" value="Thymidylate_kin-like_dom"/>
</dbReference>
<dbReference type="InterPro" id="IPR018094">
    <property type="entry name" value="Thymidylate_kinase"/>
</dbReference>
<dbReference type="NCBIfam" id="TIGR00041">
    <property type="entry name" value="DTMP_kinase"/>
    <property type="match status" value="1"/>
</dbReference>
<dbReference type="PANTHER" id="PTHR10344">
    <property type="entry name" value="THYMIDYLATE KINASE"/>
    <property type="match status" value="1"/>
</dbReference>
<dbReference type="PANTHER" id="PTHR10344:SF4">
    <property type="entry name" value="UMP-CMP KINASE 2, MITOCHONDRIAL"/>
    <property type="match status" value="1"/>
</dbReference>
<dbReference type="Pfam" id="PF02223">
    <property type="entry name" value="Thymidylate_kin"/>
    <property type="match status" value="1"/>
</dbReference>
<dbReference type="SUPFAM" id="SSF52540">
    <property type="entry name" value="P-loop containing nucleoside triphosphate hydrolases"/>
    <property type="match status" value="1"/>
</dbReference>
<comment type="catalytic activity">
    <reaction evidence="1">
        <text>dTMP + ATP = dTDP + ADP</text>
        <dbReference type="Rhea" id="RHEA:13517"/>
        <dbReference type="ChEBI" id="CHEBI:30616"/>
        <dbReference type="ChEBI" id="CHEBI:58369"/>
        <dbReference type="ChEBI" id="CHEBI:63528"/>
        <dbReference type="ChEBI" id="CHEBI:456216"/>
        <dbReference type="EC" id="2.7.4.9"/>
    </reaction>
</comment>
<comment type="similarity">
    <text evidence="1">Belongs to the thymidylate kinase family.</text>
</comment>
<keyword id="KW-0067">ATP-binding</keyword>
<keyword id="KW-0418">Kinase</keyword>
<keyword id="KW-0545">Nucleotide biosynthesis</keyword>
<keyword id="KW-0547">Nucleotide-binding</keyword>
<keyword id="KW-1185">Reference proteome</keyword>
<keyword id="KW-0808">Transferase</keyword>
<proteinExistence type="inferred from homology"/>
<reference key="1">
    <citation type="journal article" date="2009" name="Stand. Genomic Sci.">
        <title>Complete genome sequence of Methanocorpusculum labreanum type strain Z.</title>
        <authorList>
            <person name="Anderson I.J."/>
            <person name="Sieprawska-Lupa M."/>
            <person name="Goltsman E."/>
            <person name="Lapidus A."/>
            <person name="Copeland A."/>
            <person name="Glavina Del Rio T."/>
            <person name="Tice H."/>
            <person name="Dalin E."/>
            <person name="Barry K."/>
            <person name="Pitluck S."/>
            <person name="Hauser L."/>
            <person name="Land M."/>
            <person name="Lucas S."/>
            <person name="Richardson P."/>
            <person name="Whitman W.B."/>
            <person name="Kyrpides N.C."/>
        </authorList>
    </citation>
    <scope>NUCLEOTIDE SEQUENCE [LARGE SCALE GENOMIC DNA]</scope>
    <source>
        <strain>ATCC 43576 / DSM 4855 / Z</strain>
    </source>
</reference>
<accession>A2ST45</accession>
<feature type="chain" id="PRO_1000023222" description="Probable thymidylate kinase">
    <location>
        <begin position="1"/>
        <end position="198"/>
    </location>
</feature>
<feature type="binding site" evidence="1">
    <location>
        <begin position="7"/>
        <end position="14"/>
    </location>
    <ligand>
        <name>ATP</name>
        <dbReference type="ChEBI" id="CHEBI:30616"/>
    </ligand>
</feature>
<sequence length="198" mass="22250">MLITLEGIDGAGKSTLYEGLKTRLQDLEPVFTKEPGSPLVNSAVRREIGANRDPFAEATLFVADHAAHLAQVVLPALEEKKLVISDRYSDSRFAYQQVSLIGIVPDPKAWLTAVHAGWSVRPDLTILLLISPETAMNRLHERPGKEHFEDPAFLEEVQKKYLERVTEDPERFLLIDAAQEPETILDFVEKSIRALPRQ</sequence>
<protein>
    <recommendedName>
        <fullName evidence="1">Probable thymidylate kinase</fullName>
        <ecNumber evidence="1">2.7.4.9</ecNumber>
    </recommendedName>
    <alternativeName>
        <fullName evidence="1">dTMP kinase</fullName>
    </alternativeName>
</protein>
<gene>
    <name evidence="1" type="primary">tmk</name>
    <name type="ordered locus">Mlab_1334</name>
</gene>
<name>KTHY_METLZ</name>
<evidence type="ECO:0000255" key="1">
    <source>
        <dbReference type="HAMAP-Rule" id="MF_00165"/>
    </source>
</evidence>
<organism>
    <name type="scientific">Methanocorpusculum labreanum (strain ATCC 43576 / DSM 4855 / Z)</name>
    <dbReference type="NCBI Taxonomy" id="410358"/>
    <lineage>
        <taxon>Archaea</taxon>
        <taxon>Methanobacteriati</taxon>
        <taxon>Methanobacteriota</taxon>
        <taxon>Stenosarchaea group</taxon>
        <taxon>Methanomicrobia</taxon>
        <taxon>Methanomicrobiales</taxon>
        <taxon>Methanocorpusculaceae</taxon>
        <taxon>Methanocorpusculum</taxon>
    </lineage>
</organism>